<evidence type="ECO:0000255" key="1">
    <source>
        <dbReference type="HAMAP-Rule" id="MF_00102"/>
    </source>
</evidence>
<evidence type="ECO:0000305" key="2"/>
<dbReference type="EC" id="1.17.1.8" evidence="1"/>
<dbReference type="EMBL" id="BA000030">
    <property type="protein sequence ID" value="BAC70232.1"/>
    <property type="molecule type" value="Genomic_DNA"/>
</dbReference>
<dbReference type="RefSeq" id="WP_010983958.1">
    <property type="nucleotide sequence ID" value="NZ_JZJK01000064.1"/>
</dbReference>
<dbReference type="SMR" id="Q82K82"/>
<dbReference type="GeneID" id="41539611"/>
<dbReference type="KEGG" id="sma:SAVERM_2521"/>
<dbReference type="eggNOG" id="COG0289">
    <property type="taxonomic scope" value="Bacteria"/>
</dbReference>
<dbReference type="HOGENOM" id="CLU_047479_0_1_11"/>
<dbReference type="OrthoDB" id="9790352at2"/>
<dbReference type="UniPathway" id="UPA00034">
    <property type="reaction ID" value="UER00018"/>
</dbReference>
<dbReference type="Proteomes" id="UP000000428">
    <property type="component" value="Chromosome"/>
</dbReference>
<dbReference type="GO" id="GO:0005829">
    <property type="term" value="C:cytosol"/>
    <property type="evidence" value="ECO:0007669"/>
    <property type="project" value="TreeGrafter"/>
</dbReference>
<dbReference type="GO" id="GO:0008839">
    <property type="term" value="F:4-hydroxy-tetrahydrodipicolinate reductase"/>
    <property type="evidence" value="ECO:0007669"/>
    <property type="project" value="UniProtKB-EC"/>
</dbReference>
<dbReference type="GO" id="GO:0051287">
    <property type="term" value="F:NAD binding"/>
    <property type="evidence" value="ECO:0007669"/>
    <property type="project" value="UniProtKB-UniRule"/>
</dbReference>
<dbReference type="GO" id="GO:0050661">
    <property type="term" value="F:NADP binding"/>
    <property type="evidence" value="ECO:0007669"/>
    <property type="project" value="UniProtKB-UniRule"/>
</dbReference>
<dbReference type="GO" id="GO:0016726">
    <property type="term" value="F:oxidoreductase activity, acting on CH or CH2 groups, NAD or NADP as acceptor"/>
    <property type="evidence" value="ECO:0007669"/>
    <property type="project" value="UniProtKB-UniRule"/>
</dbReference>
<dbReference type="GO" id="GO:0019877">
    <property type="term" value="P:diaminopimelate biosynthetic process"/>
    <property type="evidence" value="ECO:0007669"/>
    <property type="project" value="UniProtKB-UniRule"/>
</dbReference>
<dbReference type="GO" id="GO:0009089">
    <property type="term" value="P:lysine biosynthetic process via diaminopimelate"/>
    <property type="evidence" value="ECO:0007669"/>
    <property type="project" value="UniProtKB-UniRule"/>
</dbReference>
<dbReference type="CDD" id="cd02274">
    <property type="entry name" value="DHDPR_N"/>
    <property type="match status" value="1"/>
</dbReference>
<dbReference type="FunFam" id="3.30.360.10:FF:000009">
    <property type="entry name" value="4-hydroxy-tetrahydrodipicolinate reductase"/>
    <property type="match status" value="1"/>
</dbReference>
<dbReference type="Gene3D" id="3.30.360.10">
    <property type="entry name" value="Dihydrodipicolinate Reductase, domain 2"/>
    <property type="match status" value="1"/>
</dbReference>
<dbReference type="Gene3D" id="3.40.50.720">
    <property type="entry name" value="NAD(P)-binding Rossmann-like Domain"/>
    <property type="match status" value="1"/>
</dbReference>
<dbReference type="HAMAP" id="MF_00102">
    <property type="entry name" value="DapB"/>
    <property type="match status" value="1"/>
</dbReference>
<dbReference type="InterPro" id="IPR022663">
    <property type="entry name" value="DapB_C"/>
</dbReference>
<dbReference type="InterPro" id="IPR000846">
    <property type="entry name" value="DapB_N"/>
</dbReference>
<dbReference type="InterPro" id="IPR022664">
    <property type="entry name" value="DapB_N_CS"/>
</dbReference>
<dbReference type="InterPro" id="IPR023940">
    <property type="entry name" value="DHDPR_bac"/>
</dbReference>
<dbReference type="InterPro" id="IPR036291">
    <property type="entry name" value="NAD(P)-bd_dom_sf"/>
</dbReference>
<dbReference type="NCBIfam" id="TIGR00036">
    <property type="entry name" value="dapB"/>
    <property type="match status" value="1"/>
</dbReference>
<dbReference type="PANTHER" id="PTHR20836:SF0">
    <property type="entry name" value="4-HYDROXY-TETRAHYDRODIPICOLINATE REDUCTASE 1, CHLOROPLASTIC-RELATED"/>
    <property type="match status" value="1"/>
</dbReference>
<dbReference type="PANTHER" id="PTHR20836">
    <property type="entry name" value="DIHYDRODIPICOLINATE REDUCTASE"/>
    <property type="match status" value="1"/>
</dbReference>
<dbReference type="Pfam" id="PF05173">
    <property type="entry name" value="DapB_C"/>
    <property type="match status" value="1"/>
</dbReference>
<dbReference type="Pfam" id="PF01113">
    <property type="entry name" value="DapB_N"/>
    <property type="match status" value="1"/>
</dbReference>
<dbReference type="PIRSF" id="PIRSF000161">
    <property type="entry name" value="DHPR"/>
    <property type="match status" value="1"/>
</dbReference>
<dbReference type="SUPFAM" id="SSF55347">
    <property type="entry name" value="Glyceraldehyde-3-phosphate dehydrogenase-like, C-terminal domain"/>
    <property type="match status" value="1"/>
</dbReference>
<dbReference type="SUPFAM" id="SSF51735">
    <property type="entry name" value="NAD(P)-binding Rossmann-fold domains"/>
    <property type="match status" value="1"/>
</dbReference>
<dbReference type="PROSITE" id="PS01298">
    <property type="entry name" value="DAPB"/>
    <property type="match status" value="1"/>
</dbReference>
<proteinExistence type="inferred from homology"/>
<accession>Q82K82</accession>
<reference key="1">
    <citation type="journal article" date="2001" name="Proc. Natl. Acad. Sci. U.S.A.">
        <title>Genome sequence of an industrial microorganism Streptomyces avermitilis: deducing the ability of producing secondary metabolites.</title>
        <authorList>
            <person name="Omura S."/>
            <person name="Ikeda H."/>
            <person name="Ishikawa J."/>
            <person name="Hanamoto A."/>
            <person name="Takahashi C."/>
            <person name="Shinose M."/>
            <person name="Takahashi Y."/>
            <person name="Horikawa H."/>
            <person name="Nakazawa H."/>
            <person name="Osonoe T."/>
            <person name="Kikuchi H."/>
            <person name="Shiba T."/>
            <person name="Sakaki Y."/>
            <person name="Hattori M."/>
        </authorList>
    </citation>
    <scope>NUCLEOTIDE SEQUENCE [LARGE SCALE GENOMIC DNA]</scope>
    <source>
        <strain>ATCC 31267 / DSM 46492 / JCM 5070 / NBRC 14893 / NCIMB 12804 / NRRL 8165 / MA-4680</strain>
    </source>
</reference>
<reference key="2">
    <citation type="journal article" date="2003" name="Nat. Biotechnol.">
        <title>Complete genome sequence and comparative analysis of the industrial microorganism Streptomyces avermitilis.</title>
        <authorList>
            <person name="Ikeda H."/>
            <person name="Ishikawa J."/>
            <person name="Hanamoto A."/>
            <person name="Shinose M."/>
            <person name="Kikuchi H."/>
            <person name="Shiba T."/>
            <person name="Sakaki Y."/>
            <person name="Hattori M."/>
            <person name="Omura S."/>
        </authorList>
    </citation>
    <scope>NUCLEOTIDE SEQUENCE [LARGE SCALE GENOMIC DNA]</scope>
    <source>
        <strain>ATCC 31267 / DSM 46492 / JCM 5070 / NBRC 14893 / NCIMB 12804 / NRRL 8165 / MA-4680</strain>
    </source>
</reference>
<keyword id="KW-0028">Amino-acid biosynthesis</keyword>
<keyword id="KW-0963">Cytoplasm</keyword>
<keyword id="KW-0220">Diaminopimelate biosynthesis</keyword>
<keyword id="KW-0457">Lysine biosynthesis</keyword>
<keyword id="KW-0520">NAD</keyword>
<keyword id="KW-0521">NADP</keyword>
<keyword id="KW-0560">Oxidoreductase</keyword>
<keyword id="KW-1185">Reference proteome</keyword>
<feature type="chain" id="PRO_0000141494" description="4-hydroxy-tetrahydrodipicolinate reductase">
    <location>
        <begin position="1"/>
        <end position="250"/>
    </location>
</feature>
<feature type="active site" description="Proton donor/acceptor" evidence="1">
    <location>
        <position position="135"/>
    </location>
</feature>
<feature type="active site" description="Proton donor" evidence="1">
    <location>
        <position position="139"/>
    </location>
</feature>
<feature type="binding site" evidence="1">
    <location>
        <begin position="10"/>
        <end position="15"/>
    </location>
    <ligand>
        <name>NAD(+)</name>
        <dbReference type="ChEBI" id="CHEBI:57540"/>
    </ligand>
</feature>
<feature type="binding site" evidence="1">
    <location>
        <begin position="78"/>
        <end position="80"/>
    </location>
    <ligand>
        <name>NAD(+)</name>
        <dbReference type="ChEBI" id="CHEBI:57540"/>
    </ligand>
</feature>
<feature type="binding site" evidence="1">
    <location>
        <begin position="105"/>
        <end position="108"/>
    </location>
    <ligand>
        <name>NAD(+)</name>
        <dbReference type="ChEBI" id="CHEBI:57540"/>
    </ligand>
</feature>
<feature type="binding site" evidence="1">
    <location>
        <position position="136"/>
    </location>
    <ligand>
        <name>(S)-2,3,4,5-tetrahydrodipicolinate</name>
        <dbReference type="ChEBI" id="CHEBI:16845"/>
    </ligand>
</feature>
<feature type="binding site" evidence="1">
    <location>
        <begin position="145"/>
        <end position="146"/>
    </location>
    <ligand>
        <name>(S)-2,3,4,5-tetrahydrodipicolinate</name>
        <dbReference type="ChEBI" id="CHEBI:16845"/>
    </ligand>
</feature>
<gene>
    <name evidence="1" type="primary">dapB</name>
    <name type="ordered locus">SAV_2521</name>
</gene>
<organism>
    <name type="scientific">Streptomyces avermitilis (strain ATCC 31267 / DSM 46492 / JCM 5070 / NBRC 14893 / NCIMB 12804 / NRRL 8165 / MA-4680)</name>
    <dbReference type="NCBI Taxonomy" id="227882"/>
    <lineage>
        <taxon>Bacteria</taxon>
        <taxon>Bacillati</taxon>
        <taxon>Actinomycetota</taxon>
        <taxon>Actinomycetes</taxon>
        <taxon>Kitasatosporales</taxon>
        <taxon>Streptomycetaceae</taxon>
        <taxon>Streptomyces</taxon>
    </lineage>
</organism>
<protein>
    <recommendedName>
        <fullName evidence="1">4-hydroxy-tetrahydrodipicolinate reductase</fullName>
        <shortName evidence="1">HTPA reductase</shortName>
        <ecNumber evidence="1">1.17.1.8</ecNumber>
    </recommendedName>
</protein>
<comment type="function">
    <text evidence="1">Catalyzes the conversion of 4-hydroxy-tetrahydrodipicolinate (HTPA) to tetrahydrodipicolinate.</text>
</comment>
<comment type="catalytic activity">
    <reaction evidence="1">
        <text>(S)-2,3,4,5-tetrahydrodipicolinate + NAD(+) + H2O = (2S,4S)-4-hydroxy-2,3,4,5-tetrahydrodipicolinate + NADH + H(+)</text>
        <dbReference type="Rhea" id="RHEA:35323"/>
        <dbReference type="ChEBI" id="CHEBI:15377"/>
        <dbReference type="ChEBI" id="CHEBI:15378"/>
        <dbReference type="ChEBI" id="CHEBI:16845"/>
        <dbReference type="ChEBI" id="CHEBI:57540"/>
        <dbReference type="ChEBI" id="CHEBI:57945"/>
        <dbReference type="ChEBI" id="CHEBI:67139"/>
        <dbReference type="EC" id="1.17.1.8"/>
    </reaction>
</comment>
<comment type="catalytic activity">
    <reaction evidence="1">
        <text>(S)-2,3,4,5-tetrahydrodipicolinate + NADP(+) + H2O = (2S,4S)-4-hydroxy-2,3,4,5-tetrahydrodipicolinate + NADPH + H(+)</text>
        <dbReference type="Rhea" id="RHEA:35331"/>
        <dbReference type="ChEBI" id="CHEBI:15377"/>
        <dbReference type="ChEBI" id="CHEBI:15378"/>
        <dbReference type="ChEBI" id="CHEBI:16845"/>
        <dbReference type="ChEBI" id="CHEBI:57783"/>
        <dbReference type="ChEBI" id="CHEBI:58349"/>
        <dbReference type="ChEBI" id="CHEBI:67139"/>
        <dbReference type="EC" id="1.17.1.8"/>
    </reaction>
</comment>
<comment type="pathway">
    <text evidence="1">Amino-acid biosynthesis; L-lysine biosynthesis via DAP pathway; (S)-tetrahydrodipicolinate from L-aspartate: step 4/4.</text>
</comment>
<comment type="subcellular location">
    <subcellularLocation>
        <location evidence="1">Cytoplasm</location>
    </subcellularLocation>
</comment>
<comment type="similarity">
    <text evidence="1">Belongs to the DapB family.</text>
</comment>
<comment type="caution">
    <text evidence="2">Was originally thought to be a dihydrodipicolinate reductase (DHDPR), catalyzing the conversion of dihydrodipicolinate to tetrahydrodipicolinate. However, it was shown in E.coli that the substrate of the enzymatic reaction is not dihydrodipicolinate (DHDP) but in fact (2S,4S)-4-hydroxy-2,3,4,5-tetrahydrodipicolinic acid (HTPA), the product released by the DapA-catalyzed reaction.</text>
</comment>
<name>DAPB_STRAW</name>
<sequence length="250" mass="26280">MSKLRVAVLGVKGRIGSEAVRAVEAAEDMELVAALGRGDKLETLADTGAQVAVELTTPASVMGNLDFCVRHGIHAVVGTTGWTDDRLAQLKGWLAQSPETGVLIAPNFSIGAVLTMKFAQLAAPYFESVEVVELHHPNKVDAPSGTATRTAQLIAEARRKAGSAPQPDATVTALDGARGANVDGVPVHAVRLRGLLAHQEVLLGAEGETLTVRHDSLHHSSFMPGILLGARRVVTTPGLTFGLEHFLDLN</sequence>